<name>ADDB_BACC1</name>
<sequence length="1171" mass="134159">MSLRFVIGRAGSGKSTLCLHEVQEELKQRPRGETILYLVPEQMTFQTQQALIGSEDVRGSIRAQVFSFSRLAWKVLQEVGGASRLHIDEAGVHMLLRKIVESRKDGLSVFQKAAEQNGFFEHLGSMIAEFKRYNVTPSNVYEMWQQLDAHSSSAEQKLLANKVYDLQLLYDDFERALIGKYLDSEDYLQLLVEKLPQSEYVKGAEIYIDGFHSFSPQELEIVRQLMICGARVTITLTLDEKTLAQPVNELDLFYETTLTYEKIKQVAREEKIEIEKTIPLMEQPRFHSPALAHLEAHYEARPNEKFNGEASVTIHTAANLRAEVEGVAREIRRLVADEDYRYRDIAVLLRNGESYYDVMRTLFTDYNIPHFIDEKRPMSHHPLVECIRSALEIISGNWRYDAVFRCVKTELLYPLDVRKETMREEMDEFENYCLAYGVQGKRWTSEDPWMYRRYRSLDDTNGMITDSEREMEEKINRLRDVVRTPVIRMQKRLKRAGTVMQMCEAVYLFLEELDVPKKLEALRIRAEESGDFLFATDHEQVWEEVMSLLDTFVEMLGEEKMSLSMFTDVMSTGLEALQFANIPPSLDQVLIANIDRSRLSNVKATFVIGVNEGVIPAAPMDEGMLSDEERDVLSAAGIELAPTTRQTLLEEQFVMYQMVTRATEKLYISCPLADEEGKTLLASSFIKKIKRMFPDVKDTFITNDVNDLSRSEQISYVATPEVTLSYVMQQLQTWKRYGFEGNLDFWWDVYNFYVTSDEWKQKSSRVLSSLFYRNRAQKLSTAVSRDLYGDKIKGSVSRMELFNRCAYAHFAQHGLSLRERDIFKLDAPDIGELFHAALKRIADRLLRENRTWADLSIKECEHLSAVVIEEIAPLLQRQILLSSNRHFYLKQKLQQIIFRTSIILREHAKSSGFVPVDLEVPFGMGGTGSLPPMEFSLPNGVKMEVVGRIDRVDKAEDENGTFLRIIDYKSSSKALDLTEVYYGLALQMLTYLDVVTSNAHTWMKKGGTASPAGVLYFHIHNPIVEVKGDASEAEIEKEILKKFKMKGLVLGDADVVRLMDNKLSTGSSDIISAGLKKDGSFSARSSIASEQEFNVLQKYVHHTFENIGKDITEGVIDIAPYKKGNKAACTFCNFKSVCQFDESLEDNQFRTLKDMKDSEAMEKIREEVGGE</sequence>
<gene>
    <name evidence="1" type="primary">addB</name>
    <name type="ordered locus">BCE_1244</name>
</gene>
<accession>Q73C24</accession>
<protein>
    <recommendedName>
        <fullName evidence="1">ATP-dependent helicase/deoxyribonuclease subunit B</fullName>
        <ecNumber evidence="1">3.1.-.-</ecNumber>
    </recommendedName>
    <alternativeName>
        <fullName evidence="1">ATP-dependent helicase/nuclease subunit AddB</fullName>
    </alternativeName>
</protein>
<keyword id="KW-0004">4Fe-4S</keyword>
<keyword id="KW-0067">ATP-binding</keyword>
<keyword id="KW-0227">DNA damage</keyword>
<keyword id="KW-0234">DNA repair</keyword>
<keyword id="KW-0238">DNA-binding</keyword>
<keyword id="KW-0269">Exonuclease</keyword>
<keyword id="KW-0347">Helicase</keyword>
<keyword id="KW-0378">Hydrolase</keyword>
<keyword id="KW-0408">Iron</keyword>
<keyword id="KW-0411">Iron-sulfur</keyword>
<keyword id="KW-0479">Metal-binding</keyword>
<keyword id="KW-0540">Nuclease</keyword>
<keyword id="KW-0547">Nucleotide-binding</keyword>
<evidence type="ECO:0000255" key="1">
    <source>
        <dbReference type="HAMAP-Rule" id="MF_01452"/>
    </source>
</evidence>
<feature type="chain" id="PRO_0000379155" description="ATP-dependent helicase/deoxyribonuclease subunit B">
    <location>
        <begin position="1"/>
        <end position="1171"/>
    </location>
</feature>
<feature type="domain" description="UvrD-like helicase ATP-binding" evidence="1">
    <location>
        <begin position="1"/>
        <end position="390"/>
    </location>
</feature>
<feature type="domain" description="UvrD-like helicase C-terminal" evidence="1">
    <location>
        <begin position="281"/>
        <end position="587"/>
    </location>
</feature>
<feature type="binding site" evidence="1">
    <location>
        <begin position="8"/>
        <end position="15"/>
    </location>
    <ligand>
        <name>ATP</name>
        <dbReference type="ChEBI" id="CHEBI:30616"/>
    </ligand>
</feature>
<feature type="binding site" evidence="1">
    <location>
        <position position="805"/>
    </location>
    <ligand>
        <name>[4Fe-4S] cluster</name>
        <dbReference type="ChEBI" id="CHEBI:49883"/>
    </ligand>
</feature>
<feature type="binding site" evidence="1">
    <location>
        <position position="1129"/>
    </location>
    <ligand>
        <name>[4Fe-4S] cluster</name>
        <dbReference type="ChEBI" id="CHEBI:49883"/>
    </ligand>
</feature>
<feature type="binding site" evidence="1">
    <location>
        <position position="1132"/>
    </location>
    <ligand>
        <name>[4Fe-4S] cluster</name>
        <dbReference type="ChEBI" id="CHEBI:49883"/>
    </ligand>
</feature>
<feature type="binding site" evidence="1">
    <location>
        <position position="1138"/>
    </location>
    <ligand>
        <name>[4Fe-4S] cluster</name>
        <dbReference type="ChEBI" id="CHEBI:49883"/>
    </ligand>
</feature>
<reference key="1">
    <citation type="journal article" date="2004" name="Nucleic Acids Res.">
        <title>The genome sequence of Bacillus cereus ATCC 10987 reveals metabolic adaptations and a large plasmid related to Bacillus anthracis pXO1.</title>
        <authorList>
            <person name="Rasko D.A."/>
            <person name="Ravel J."/>
            <person name="Oekstad O.A."/>
            <person name="Helgason E."/>
            <person name="Cer R.Z."/>
            <person name="Jiang L."/>
            <person name="Shores K.A."/>
            <person name="Fouts D.E."/>
            <person name="Tourasse N.J."/>
            <person name="Angiuoli S.V."/>
            <person name="Kolonay J.F."/>
            <person name="Nelson W.C."/>
            <person name="Kolstoe A.-B."/>
            <person name="Fraser C.M."/>
            <person name="Read T.D."/>
        </authorList>
    </citation>
    <scope>NUCLEOTIDE SEQUENCE [LARGE SCALE GENOMIC DNA]</scope>
    <source>
        <strain>ATCC 10987 / NRS 248</strain>
    </source>
</reference>
<organism>
    <name type="scientific">Bacillus cereus (strain ATCC 10987 / NRS 248)</name>
    <dbReference type="NCBI Taxonomy" id="222523"/>
    <lineage>
        <taxon>Bacteria</taxon>
        <taxon>Bacillati</taxon>
        <taxon>Bacillota</taxon>
        <taxon>Bacilli</taxon>
        <taxon>Bacillales</taxon>
        <taxon>Bacillaceae</taxon>
        <taxon>Bacillus</taxon>
        <taxon>Bacillus cereus group</taxon>
    </lineage>
</organism>
<proteinExistence type="inferred from homology"/>
<comment type="function">
    <text evidence="1">The heterodimer acts as both an ATP-dependent DNA helicase and an ATP-dependent, dual-direction single-stranded exonuclease. Recognizes the chi site generating a DNA molecule suitable for the initiation of homologous recombination. The AddB subunit has 5' -&gt; 3' nuclease activity but not helicase activity.</text>
</comment>
<comment type="cofactor">
    <cofactor evidence="1">
        <name>Mg(2+)</name>
        <dbReference type="ChEBI" id="CHEBI:18420"/>
    </cofactor>
</comment>
<comment type="cofactor">
    <cofactor evidence="1">
        <name>[4Fe-4S] cluster</name>
        <dbReference type="ChEBI" id="CHEBI:49883"/>
    </cofactor>
    <text evidence="1">Binds 1 [4Fe-4S] cluster.</text>
</comment>
<comment type="subunit">
    <text evidence="1">Heterodimer of AddA and AddB.</text>
</comment>
<comment type="miscellaneous">
    <text evidence="1">Despite having conserved helicase domains, this subunit does not have helicase activity.</text>
</comment>
<comment type="similarity">
    <text evidence="1">Belongs to the helicase family. AddB/RexB type 1 subfamily.</text>
</comment>
<dbReference type="EC" id="3.1.-.-" evidence="1"/>
<dbReference type="EMBL" id="AE017194">
    <property type="protein sequence ID" value="AAS40173.1"/>
    <property type="molecule type" value="Genomic_DNA"/>
</dbReference>
<dbReference type="SMR" id="Q73C24"/>
<dbReference type="KEGG" id="bca:BCE_1244"/>
<dbReference type="HOGENOM" id="CLU_007838_0_0_9"/>
<dbReference type="Proteomes" id="UP000002527">
    <property type="component" value="Chromosome"/>
</dbReference>
<dbReference type="GO" id="GO:0051539">
    <property type="term" value="F:4 iron, 4 sulfur cluster binding"/>
    <property type="evidence" value="ECO:0007669"/>
    <property type="project" value="UniProtKB-KW"/>
</dbReference>
<dbReference type="GO" id="GO:0008409">
    <property type="term" value="F:5'-3' exonuclease activity"/>
    <property type="evidence" value="ECO:0007669"/>
    <property type="project" value="UniProtKB-UniRule"/>
</dbReference>
<dbReference type="GO" id="GO:0005524">
    <property type="term" value="F:ATP binding"/>
    <property type="evidence" value="ECO:0007669"/>
    <property type="project" value="UniProtKB-UniRule"/>
</dbReference>
<dbReference type="GO" id="GO:0003690">
    <property type="term" value="F:double-stranded DNA binding"/>
    <property type="evidence" value="ECO:0007669"/>
    <property type="project" value="UniProtKB-UniRule"/>
</dbReference>
<dbReference type="GO" id="GO:0004386">
    <property type="term" value="F:helicase activity"/>
    <property type="evidence" value="ECO:0007669"/>
    <property type="project" value="UniProtKB-KW"/>
</dbReference>
<dbReference type="GO" id="GO:0046872">
    <property type="term" value="F:metal ion binding"/>
    <property type="evidence" value="ECO:0007669"/>
    <property type="project" value="UniProtKB-KW"/>
</dbReference>
<dbReference type="GO" id="GO:0000724">
    <property type="term" value="P:double-strand break repair via homologous recombination"/>
    <property type="evidence" value="ECO:0007669"/>
    <property type="project" value="UniProtKB-UniRule"/>
</dbReference>
<dbReference type="FunFam" id="3.40.50.300:FF:001679">
    <property type="entry name" value="ATP-dependent helicase/deoxyribonuclease subunit B"/>
    <property type="match status" value="1"/>
</dbReference>
<dbReference type="FunFam" id="3.40.50.300:FF:001704">
    <property type="entry name" value="ATP-dependent helicase/deoxyribonuclease subunit B"/>
    <property type="match status" value="1"/>
</dbReference>
<dbReference type="FunFam" id="3.40.50.300:FF:001705">
    <property type="entry name" value="ATP-dependent helicase/deoxyribonuclease subunit B"/>
    <property type="match status" value="1"/>
</dbReference>
<dbReference type="FunFam" id="3.40.50.300:FF:001739">
    <property type="entry name" value="ATP-dependent helicase/deoxyribonuclease subunit B"/>
    <property type="match status" value="1"/>
</dbReference>
<dbReference type="FunFam" id="3.90.320.10:FF:000006">
    <property type="entry name" value="ATP-dependent helicase/deoxyribonuclease subunit B"/>
    <property type="match status" value="1"/>
</dbReference>
<dbReference type="Gene3D" id="3.90.320.10">
    <property type="match status" value="1"/>
</dbReference>
<dbReference type="Gene3D" id="6.10.140.1030">
    <property type="match status" value="1"/>
</dbReference>
<dbReference type="Gene3D" id="3.40.50.300">
    <property type="entry name" value="P-loop containing nucleotide triphosphate hydrolases"/>
    <property type="match status" value="4"/>
</dbReference>
<dbReference type="HAMAP" id="MF_01452">
    <property type="entry name" value="AddB_type1"/>
    <property type="match status" value="1"/>
</dbReference>
<dbReference type="InterPro" id="IPR049035">
    <property type="entry name" value="ADDB_N"/>
</dbReference>
<dbReference type="InterPro" id="IPR014140">
    <property type="entry name" value="DNA_helicase_suAddB"/>
</dbReference>
<dbReference type="InterPro" id="IPR014017">
    <property type="entry name" value="DNA_helicase_UvrD-like_C"/>
</dbReference>
<dbReference type="InterPro" id="IPR027417">
    <property type="entry name" value="P-loop_NTPase"/>
</dbReference>
<dbReference type="InterPro" id="IPR011604">
    <property type="entry name" value="PDDEXK-like_dom_sf"/>
</dbReference>
<dbReference type="InterPro" id="IPR038726">
    <property type="entry name" value="PDDEXK_AddAB-type"/>
</dbReference>
<dbReference type="NCBIfam" id="TIGR02773">
    <property type="entry name" value="addB_Gpos"/>
    <property type="match status" value="1"/>
</dbReference>
<dbReference type="PANTHER" id="PTHR30591">
    <property type="entry name" value="RECBCD ENZYME SUBUNIT RECC"/>
    <property type="match status" value="1"/>
</dbReference>
<dbReference type="PANTHER" id="PTHR30591:SF1">
    <property type="entry name" value="RECBCD ENZYME SUBUNIT RECC"/>
    <property type="match status" value="1"/>
</dbReference>
<dbReference type="Pfam" id="PF21445">
    <property type="entry name" value="ADDB_N"/>
    <property type="match status" value="1"/>
</dbReference>
<dbReference type="Pfam" id="PF12705">
    <property type="entry name" value="PDDEXK_1"/>
    <property type="match status" value="1"/>
</dbReference>
<dbReference type="Pfam" id="PF13361">
    <property type="entry name" value="UvrD_C"/>
    <property type="match status" value="1"/>
</dbReference>
<dbReference type="SUPFAM" id="SSF52540">
    <property type="entry name" value="P-loop containing nucleoside triphosphate hydrolases"/>
    <property type="match status" value="2"/>
</dbReference>
<dbReference type="PROSITE" id="PS51198">
    <property type="entry name" value="UVRD_HELICASE_ATP_BIND"/>
    <property type="match status" value="1"/>
</dbReference>
<dbReference type="PROSITE" id="PS51217">
    <property type="entry name" value="UVRD_HELICASE_CTER"/>
    <property type="match status" value="1"/>
</dbReference>